<name>TATA_BORPD</name>
<reference key="1">
    <citation type="journal article" date="2008" name="BMC Genomics">
        <title>The missing link: Bordetella petrii is endowed with both the metabolic versatility of environmental bacteria and virulence traits of pathogenic Bordetellae.</title>
        <authorList>
            <person name="Gross R."/>
            <person name="Guzman C.A."/>
            <person name="Sebaihia M."/>
            <person name="Martin dos Santos V.A.P."/>
            <person name="Pieper D.H."/>
            <person name="Koebnik R."/>
            <person name="Lechner M."/>
            <person name="Bartels D."/>
            <person name="Buhrmester J."/>
            <person name="Choudhuri J.V."/>
            <person name="Ebensen T."/>
            <person name="Gaigalat L."/>
            <person name="Herrmann S."/>
            <person name="Khachane A.N."/>
            <person name="Larisch C."/>
            <person name="Link S."/>
            <person name="Linke B."/>
            <person name="Meyer F."/>
            <person name="Mormann S."/>
            <person name="Nakunst D."/>
            <person name="Rueckert C."/>
            <person name="Schneiker-Bekel S."/>
            <person name="Schulze K."/>
            <person name="Voerholter F.-J."/>
            <person name="Yevsa T."/>
            <person name="Engle J.T."/>
            <person name="Goldman W.E."/>
            <person name="Puehler A."/>
            <person name="Goebel U.B."/>
            <person name="Goesmann A."/>
            <person name="Bloecker H."/>
            <person name="Kaiser O."/>
            <person name="Martinez-Arias R."/>
        </authorList>
    </citation>
    <scope>NUCLEOTIDE SEQUENCE [LARGE SCALE GENOMIC DNA]</scope>
    <source>
        <strain>ATCC BAA-461 / DSM 12804 / CCUG 43448</strain>
    </source>
</reference>
<dbReference type="EMBL" id="AM902716">
    <property type="protein sequence ID" value="CAP40460.1"/>
    <property type="molecule type" value="Genomic_DNA"/>
</dbReference>
<dbReference type="SMR" id="A9HWB1"/>
<dbReference type="STRING" id="94624.Bpet0129"/>
<dbReference type="KEGG" id="bpt:Bpet0129"/>
<dbReference type="eggNOG" id="COG1826">
    <property type="taxonomic scope" value="Bacteria"/>
</dbReference>
<dbReference type="Proteomes" id="UP000001225">
    <property type="component" value="Chromosome"/>
</dbReference>
<dbReference type="GO" id="GO:0033281">
    <property type="term" value="C:TAT protein transport complex"/>
    <property type="evidence" value="ECO:0007669"/>
    <property type="project" value="UniProtKB-UniRule"/>
</dbReference>
<dbReference type="GO" id="GO:0008320">
    <property type="term" value="F:protein transmembrane transporter activity"/>
    <property type="evidence" value="ECO:0007669"/>
    <property type="project" value="UniProtKB-UniRule"/>
</dbReference>
<dbReference type="GO" id="GO:0043953">
    <property type="term" value="P:protein transport by the Tat complex"/>
    <property type="evidence" value="ECO:0007669"/>
    <property type="project" value="UniProtKB-UniRule"/>
</dbReference>
<dbReference type="Gene3D" id="1.20.5.3310">
    <property type="match status" value="1"/>
</dbReference>
<dbReference type="HAMAP" id="MF_00236">
    <property type="entry name" value="TatA_E"/>
    <property type="match status" value="1"/>
</dbReference>
<dbReference type="InterPro" id="IPR003369">
    <property type="entry name" value="TatA/B/E"/>
</dbReference>
<dbReference type="InterPro" id="IPR006312">
    <property type="entry name" value="TatA/E"/>
</dbReference>
<dbReference type="NCBIfam" id="NF002813">
    <property type="entry name" value="PRK02958.1"/>
    <property type="match status" value="1"/>
</dbReference>
<dbReference type="NCBIfam" id="TIGR01411">
    <property type="entry name" value="tatAE"/>
    <property type="match status" value="1"/>
</dbReference>
<dbReference type="PANTHER" id="PTHR42982">
    <property type="entry name" value="SEC-INDEPENDENT PROTEIN TRANSLOCASE PROTEIN TATA"/>
    <property type="match status" value="1"/>
</dbReference>
<dbReference type="PANTHER" id="PTHR42982:SF1">
    <property type="entry name" value="SEC-INDEPENDENT PROTEIN TRANSLOCASE PROTEIN TATA"/>
    <property type="match status" value="1"/>
</dbReference>
<dbReference type="Pfam" id="PF02416">
    <property type="entry name" value="TatA_B_E"/>
    <property type="match status" value="1"/>
</dbReference>
<gene>
    <name evidence="1" type="primary">tatA</name>
    <name type="ordered locus">Bpet0129</name>
</gene>
<sequence>MGSFSIWHWLIVLVIVALVFGTKKLRNIGSDLGGAVKGFKEGMKDANSDKPAEQVTQQKVADDTIDVQAKEKTNS</sequence>
<keyword id="KW-0997">Cell inner membrane</keyword>
<keyword id="KW-1003">Cell membrane</keyword>
<keyword id="KW-0472">Membrane</keyword>
<keyword id="KW-0653">Protein transport</keyword>
<keyword id="KW-0811">Translocation</keyword>
<keyword id="KW-0812">Transmembrane</keyword>
<keyword id="KW-1133">Transmembrane helix</keyword>
<keyword id="KW-0813">Transport</keyword>
<comment type="function">
    <text evidence="1">Part of the twin-arginine translocation (Tat) system that transports large folded proteins containing a characteristic twin-arginine motif in their signal peptide across membranes. TatA could form the protein-conducting channel of the Tat system.</text>
</comment>
<comment type="subunit">
    <text evidence="1">The Tat system comprises two distinct complexes: a TatABC complex, containing multiple copies of TatA, TatB and TatC subunits, and a separate TatA complex, containing only TatA subunits. Substrates initially bind to the TatABC complex, which probably triggers association of the separate TatA complex to form the active translocon.</text>
</comment>
<comment type="subcellular location">
    <subcellularLocation>
        <location evidence="1">Cell inner membrane</location>
        <topology evidence="1">Single-pass membrane protein</topology>
    </subcellularLocation>
</comment>
<comment type="similarity">
    <text evidence="1">Belongs to the TatA/E family.</text>
</comment>
<proteinExistence type="inferred from homology"/>
<accession>A9HWB1</accession>
<evidence type="ECO:0000255" key="1">
    <source>
        <dbReference type="HAMAP-Rule" id="MF_00236"/>
    </source>
</evidence>
<evidence type="ECO:0000256" key="2">
    <source>
        <dbReference type="SAM" id="MobiDB-lite"/>
    </source>
</evidence>
<organism>
    <name type="scientific">Bordetella petrii (strain ATCC BAA-461 / DSM 12804 / CCUG 43448)</name>
    <dbReference type="NCBI Taxonomy" id="340100"/>
    <lineage>
        <taxon>Bacteria</taxon>
        <taxon>Pseudomonadati</taxon>
        <taxon>Pseudomonadota</taxon>
        <taxon>Betaproteobacteria</taxon>
        <taxon>Burkholderiales</taxon>
        <taxon>Alcaligenaceae</taxon>
        <taxon>Bordetella</taxon>
    </lineage>
</organism>
<protein>
    <recommendedName>
        <fullName evidence="1">Sec-independent protein translocase protein TatA</fullName>
    </recommendedName>
</protein>
<feature type="chain" id="PRO_1000125196" description="Sec-independent protein translocase protein TatA">
    <location>
        <begin position="1"/>
        <end position="75"/>
    </location>
</feature>
<feature type="transmembrane region" description="Helical" evidence="1">
    <location>
        <begin position="1"/>
        <end position="21"/>
    </location>
</feature>
<feature type="region of interest" description="Disordered" evidence="2">
    <location>
        <begin position="44"/>
        <end position="75"/>
    </location>
</feature>